<dbReference type="EMBL" id="U14003">
    <property type="protein sequence ID" value="AAA97119.1"/>
    <property type="molecule type" value="Genomic_DNA"/>
</dbReference>
<dbReference type="EMBL" id="U00096">
    <property type="protein sequence ID" value="AAC77179.1"/>
    <property type="molecule type" value="Genomic_DNA"/>
</dbReference>
<dbReference type="EMBL" id="AP009048">
    <property type="protein sequence ID" value="BAE78223.1"/>
    <property type="molecule type" value="Genomic_DNA"/>
</dbReference>
<dbReference type="PIR" id="S56448">
    <property type="entry name" value="S56448"/>
</dbReference>
<dbReference type="RefSeq" id="NP_418643.1">
    <property type="nucleotide sequence ID" value="NC_000913.3"/>
</dbReference>
<dbReference type="RefSeq" id="WP_001219160.1">
    <property type="nucleotide sequence ID" value="NZ_STEB01000013.1"/>
</dbReference>
<dbReference type="PDB" id="1XHS">
    <property type="method" value="NMR"/>
    <property type="chains" value="A=1-113"/>
</dbReference>
<dbReference type="PDBsum" id="1XHS"/>
<dbReference type="BMRB" id="P0AE48"/>
<dbReference type="SMR" id="P0AE48"/>
<dbReference type="BioGRID" id="4260673">
    <property type="interactions" value="12"/>
</dbReference>
<dbReference type="BioGRID" id="853032">
    <property type="interactions" value="1"/>
</dbReference>
<dbReference type="FunCoup" id="P0AE48">
    <property type="interactions" value="6"/>
</dbReference>
<dbReference type="IntAct" id="P0AE48">
    <property type="interactions" value="1"/>
</dbReference>
<dbReference type="STRING" id="511145.b4222"/>
<dbReference type="jPOST" id="P0AE48"/>
<dbReference type="PaxDb" id="511145-b4222"/>
<dbReference type="EnsemblBacteria" id="AAC77179">
    <property type="protein sequence ID" value="AAC77179"/>
    <property type="gene ID" value="b4222"/>
</dbReference>
<dbReference type="GeneID" id="948741"/>
<dbReference type="KEGG" id="ecj:JW4181"/>
<dbReference type="KEGG" id="eco:b4222"/>
<dbReference type="KEGG" id="ecoc:C3026_22805"/>
<dbReference type="PATRIC" id="fig|1411691.4.peg.2478"/>
<dbReference type="EchoBASE" id="EB2408"/>
<dbReference type="eggNOG" id="COG2105">
    <property type="taxonomic scope" value="Bacteria"/>
</dbReference>
<dbReference type="HOGENOM" id="CLU_083466_5_2_6"/>
<dbReference type="InParanoid" id="P0AE48"/>
<dbReference type="OMA" id="WIYLYQD"/>
<dbReference type="OrthoDB" id="482277at2"/>
<dbReference type="PhylomeDB" id="P0AE48"/>
<dbReference type="BioCyc" id="EcoCyc:G7876-MONOMER"/>
<dbReference type="EvolutionaryTrace" id="P0AE48"/>
<dbReference type="PRO" id="PR:P0AE48"/>
<dbReference type="Proteomes" id="UP000000625">
    <property type="component" value="Chromosome"/>
</dbReference>
<dbReference type="GO" id="GO:0005829">
    <property type="term" value="C:cytosol"/>
    <property type="evidence" value="ECO:0000314"/>
    <property type="project" value="EcoCyc"/>
</dbReference>
<dbReference type="GO" id="GO:0061929">
    <property type="term" value="F:gamma-glutamylaminecyclotransferase activity"/>
    <property type="evidence" value="ECO:0007669"/>
    <property type="project" value="InterPro"/>
</dbReference>
<dbReference type="CDD" id="cd06661">
    <property type="entry name" value="GGCT_like"/>
    <property type="match status" value="1"/>
</dbReference>
<dbReference type="FunFam" id="3.10.490.10:FF:000001">
    <property type="entry name" value="Gamma-glutamylcyclotransferase ytfP"/>
    <property type="match status" value="1"/>
</dbReference>
<dbReference type="Gene3D" id="3.10.490.10">
    <property type="entry name" value="Gamma-glutamyl cyclotransferase-like"/>
    <property type="match status" value="1"/>
</dbReference>
<dbReference type="InterPro" id="IPR009288">
    <property type="entry name" value="AIG2-like_dom"/>
</dbReference>
<dbReference type="InterPro" id="IPR039126">
    <property type="entry name" value="GGACT"/>
</dbReference>
<dbReference type="InterPro" id="IPR013024">
    <property type="entry name" value="GGCT-like"/>
</dbReference>
<dbReference type="InterPro" id="IPR036568">
    <property type="entry name" value="GGCT-like_sf"/>
</dbReference>
<dbReference type="PANTHER" id="PTHR12510:SF4">
    <property type="entry name" value="GAMMA-GLUTAMYLAMINECYCLOTRANSFERASE"/>
    <property type="match status" value="1"/>
</dbReference>
<dbReference type="PANTHER" id="PTHR12510">
    <property type="entry name" value="TROPONIN C-AKIN-1 PROTEIN"/>
    <property type="match status" value="1"/>
</dbReference>
<dbReference type="Pfam" id="PF06094">
    <property type="entry name" value="GGACT"/>
    <property type="match status" value="1"/>
</dbReference>
<dbReference type="SUPFAM" id="SSF110857">
    <property type="entry name" value="Gamma-glutamyl cyclotransferase-like"/>
    <property type="match status" value="1"/>
</dbReference>
<comment type="function">
    <text evidence="1">May play a role in antibiotic biosynthesis.</text>
</comment>
<comment type="similarity">
    <text evidence="1">Belongs to the gamma-glutamylcyclotransferase family.</text>
</comment>
<comment type="caution">
    <text evidence="1">Lacks the conserved Glu residue at position 70 that serves as proton acceptor in enzymes with gamma-glutamylcyclotransferase activity.</text>
</comment>
<gene>
    <name type="primary">ytfP</name>
    <name type="ordered locus">b4222</name>
    <name type="ordered locus">JW4181</name>
</gene>
<evidence type="ECO:0000305" key="1"/>
<evidence type="ECO:0007829" key="2">
    <source>
        <dbReference type="PDB" id="1XHS"/>
    </source>
</evidence>
<keyword id="KW-0002">3D-structure</keyword>
<keyword id="KW-1185">Reference proteome</keyword>
<feature type="chain" id="PRO_0000184789" description="Gamma-glutamylcyclotransferase family protein YtfP">
    <location>
        <begin position="1"/>
        <end position="113"/>
    </location>
</feature>
<feature type="strand" evidence="2">
    <location>
        <begin position="2"/>
        <end position="5"/>
    </location>
</feature>
<feature type="turn" evidence="2">
    <location>
        <begin position="14"/>
        <end position="16"/>
    </location>
</feature>
<feature type="helix" evidence="2">
    <location>
        <begin position="17"/>
        <end position="20"/>
    </location>
</feature>
<feature type="strand" evidence="2">
    <location>
        <begin position="23"/>
        <end position="37"/>
    </location>
</feature>
<feature type="strand" evidence="2">
    <location>
        <begin position="39"/>
        <end position="49"/>
    </location>
</feature>
<feature type="strand" evidence="2">
    <location>
        <begin position="51"/>
        <end position="57"/>
    </location>
</feature>
<feature type="helix" evidence="2">
    <location>
        <begin position="60"/>
        <end position="70"/>
    </location>
</feature>
<feature type="strand" evidence="2">
    <location>
        <begin position="76"/>
        <end position="83"/>
    </location>
</feature>
<feature type="strand" evidence="2">
    <location>
        <begin position="86"/>
        <end position="93"/>
    </location>
</feature>
<feature type="strand" evidence="2">
    <location>
        <begin position="101"/>
        <end position="105"/>
    </location>
</feature>
<sequence length="113" mass="12866">MRIFVYGSLRHKQGNSHWMTNAQLLGDFSIDNYQLYSLGHYPGAVPGNGTVHGEVYRIDNATLAELDALRTRGGEYARQLIQTPYGSAWMYVYQRPVDGLKLIESGDWLDRDK</sequence>
<organism>
    <name type="scientific">Escherichia coli (strain K12)</name>
    <dbReference type="NCBI Taxonomy" id="83333"/>
    <lineage>
        <taxon>Bacteria</taxon>
        <taxon>Pseudomonadati</taxon>
        <taxon>Pseudomonadota</taxon>
        <taxon>Gammaproteobacteria</taxon>
        <taxon>Enterobacterales</taxon>
        <taxon>Enterobacteriaceae</taxon>
        <taxon>Escherichia</taxon>
    </lineage>
</organism>
<accession>P0AE48</accession>
<accession>P39323</accession>
<accession>Q2M683</accession>
<protein>
    <recommendedName>
        <fullName>Gamma-glutamylcyclotransferase family protein YtfP</fullName>
    </recommendedName>
</protein>
<proteinExistence type="evidence at protein level"/>
<reference key="1">
    <citation type="journal article" date="1995" name="Nucleic Acids Res.">
        <title>Analysis of the Escherichia coli genome VI: DNA sequence of the region from 92.8 through 100 minutes.</title>
        <authorList>
            <person name="Burland V.D."/>
            <person name="Plunkett G. III"/>
            <person name="Sofia H.J."/>
            <person name="Daniels D.L."/>
            <person name="Blattner F.R."/>
        </authorList>
    </citation>
    <scope>NUCLEOTIDE SEQUENCE [LARGE SCALE GENOMIC DNA]</scope>
    <source>
        <strain>K12 / MG1655 / ATCC 47076</strain>
    </source>
</reference>
<reference key="2">
    <citation type="journal article" date="1997" name="Science">
        <title>The complete genome sequence of Escherichia coli K-12.</title>
        <authorList>
            <person name="Blattner F.R."/>
            <person name="Plunkett G. III"/>
            <person name="Bloch C.A."/>
            <person name="Perna N.T."/>
            <person name="Burland V."/>
            <person name="Riley M."/>
            <person name="Collado-Vides J."/>
            <person name="Glasner J.D."/>
            <person name="Rode C.K."/>
            <person name="Mayhew G.F."/>
            <person name="Gregor J."/>
            <person name="Davis N.W."/>
            <person name="Kirkpatrick H.A."/>
            <person name="Goeden M.A."/>
            <person name="Rose D.J."/>
            <person name="Mau B."/>
            <person name="Shao Y."/>
        </authorList>
    </citation>
    <scope>NUCLEOTIDE SEQUENCE [LARGE SCALE GENOMIC DNA]</scope>
    <source>
        <strain>K12 / MG1655 / ATCC 47076</strain>
    </source>
</reference>
<reference key="3">
    <citation type="journal article" date="2006" name="Mol. Syst. Biol.">
        <title>Highly accurate genome sequences of Escherichia coli K-12 strains MG1655 and W3110.</title>
        <authorList>
            <person name="Hayashi K."/>
            <person name="Morooka N."/>
            <person name="Yamamoto Y."/>
            <person name="Fujita K."/>
            <person name="Isono K."/>
            <person name="Choi S."/>
            <person name="Ohtsubo E."/>
            <person name="Baba T."/>
            <person name="Wanner B.L."/>
            <person name="Mori H."/>
            <person name="Horiuchi T."/>
        </authorList>
    </citation>
    <scope>NUCLEOTIDE SEQUENCE [LARGE SCALE GENOMIC DNA]</scope>
    <source>
        <strain>K12 / W3110 / ATCC 27325 / DSM 5911</strain>
    </source>
</reference>
<reference key="4">
    <citation type="journal article" date="2007" name="Proteins">
        <title>Solution NMR structure of Escherichia coli YtfP expands the structural coverage of the UPF0131 protein domain family.</title>
        <authorList>
            <person name="Aramini J.M."/>
            <person name="Huang Y.J."/>
            <person name="Swapna G.V."/>
            <person name="Cort J.R."/>
            <person name="Rajan P.K."/>
            <person name="Xiao R."/>
            <person name="Shastry R."/>
            <person name="Acton T.B."/>
            <person name="Liu J."/>
            <person name="Rost B."/>
            <person name="Kennedy M.A."/>
            <person name="Montelione G.T."/>
        </authorList>
    </citation>
    <scope>STRUCTURE BY NMR</scope>
    <scope>PROPOSED FUNCTION</scope>
</reference>
<name>YTFP_ECOLI</name>